<sequence>MCSITSILGLIGRNVNYSYSPFIHNTAAEMLRLPFYYTIFNIADARQIPDALNGMRALGIAGLNVTIPYKQVVTEYVDTLSAEAQAVGAVNTIVNNNGRLSGCNTDIAGVSHPLKPYKERLHQSPAGIFGNGGAALAAVEALRRDYHPSAIRLFVRDPDKGLALAEQVHAKHPEAPIEIFKIDAYDAIRDCHLLINATPIGTKGVQTAGNSALLPQEQKLLHDGQIIFDMVYNPLRTPFVNMAAEAGAVVIPGVEMLIAQAAESFCLWTGETMPVDSIREKILKKLTAQP</sequence>
<dbReference type="EC" id="1.1.1.25" evidence="1"/>
<dbReference type="EMBL" id="CP001108">
    <property type="protein sequence ID" value="ACF46672.1"/>
    <property type="molecule type" value="Genomic_DNA"/>
</dbReference>
<dbReference type="RefSeq" id="WP_012506205.1">
    <property type="nucleotide sequence ID" value="NC_011059.1"/>
</dbReference>
<dbReference type="SMR" id="B4S9K2"/>
<dbReference type="STRING" id="290512.Paes_1654"/>
<dbReference type="KEGG" id="paa:Paes_1654"/>
<dbReference type="eggNOG" id="COG0169">
    <property type="taxonomic scope" value="Bacteria"/>
</dbReference>
<dbReference type="HOGENOM" id="CLU_044063_1_1_10"/>
<dbReference type="UniPathway" id="UPA00053">
    <property type="reaction ID" value="UER00087"/>
</dbReference>
<dbReference type="Proteomes" id="UP000002725">
    <property type="component" value="Chromosome"/>
</dbReference>
<dbReference type="GO" id="GO:0005829">
    <property type="term" value="C:cytosol"/>
    <property type="evidence" value="ECO:0007669"/>
    <property type="project" value="TreeGrafter"/>
</dbReference>
<dbReference type="GO" id="GO:0050661">
    <property type="term" value="F:NADP binding"/>
    <property type="evidence" value="ECO:0007669"/>
    <property type="project" value="TreeGrafter"/>
</dbReference>
<dbReference type="GO" id="GO:0004764">
    <property type="term" value="F:shikimate 3-dehydrogenase (NADP+) activity"/>
    <property type="evidence" value="ECO:0007669"/>
    <property type="project" value="UniProtKB-UniRule"/>
</dbReference>
<dbReference type="GO" id="GO:0008652">
    <property type="term" value="P:amino acid biosynthetic process"/>
    <property type="evidence" value="ECO:0007669"/>
    <property type="project" value="UniProtKB-KW"/>
</dbReference>
<dbReference type="GO" id="GO:0009073">
    <property type="term" value="P:aromatic amino acid family biosynthetic process"/>
    <property type="evidence" value="ECO:0007669"/>
    <property type="project" value="UniProtKB-KW"/>
</dbReference>
<dbReference type="GO" id="GO:0009423">
    <property type="term" value="P:chorismate biosynthetic process"/>
    <property type="evidence" value="ECO:0007669"/>
    <property type="project" value="UniProtKB-UniRule"/>
</dbReference>
<dbReference type="GO" id="GO:0019632">
    <property type="term" value="P:shikimate metabolic process"/>
    <property type="evidence" value="ECO:0007669"/>
    <property type="project" value="TreeGrafter"/>
</dbReference>
<dbReference type="CDD" id="cd01065">
    <property type="entry name" value="NAD_bind_Shikimate_DH"/>
    <property type="match status" value="1"/>
</dbReference>
<dbReference type="Gene3D" id="3.40.50.10860">
    <property type="entry name" value="Leucine Dehydrogenase, chain A, domain 1"/>
    <property type="match status" value="1"/>
</dbReference>
<dbReference type="Gene3D" id="3.40.50.720">
    <property type="entry name" value="NAD(P)-binding Rossmann-like Domain"/>
    <property type="match status" value="1"/>
</dbReference>
<dbReference type="HAMAP" id="MF_00222">
    <property type="entry name" value="Shikimate_DH_AroE"/>
    <property type="match status" value="1"/>
</dbReference>
<dbReference type="InterPro" id="IPR046346">
    <property type="entry name" value="Aminoacid_DH-like_N_sf"/>
</dbReference>
<dbReference type="InterPro" id="IPR036291">
    <property type="entry name" value="NAD(P)-bd_dom_sf"/>
</dbReference>
<dbReference type="InterPro" id="IPR041121">
    <property type="entry name" value="SDH_C"/>
</dbReference>
<dbReference type="InterPro" id="IPR013708">
    <property type="entry name" value="Shikimate_DH-bd_N"/>
</dbReference>
<dbReference type="InterPro" id="IPR022893">
    <property type="entry name" value="Shikimate_DH_fam"/>
</dbReference>
<dbReference type="PANTHER" id="PTHR21089:SF1">
    <property type="entry name" value="BIFUNCTIONAL 3-DEHYDROQUINATE DEHYDRATASE_SHIKIMATE DEHYDROGENASE, CHLOROPLASTIC"/>
    <property type="match status" value="1"/>
</dbReference>
<dbReference type="PANTHER" id="PTHR21089">
    <property type="entry name" value="SHIKIMATE DEHYDROGENASE"/>
    <property type="match status" value="1"/>
</dbReference>
<dbReference type="Pfam" id="PF18317">
    <property type="entry name" value="SDH_C"/>
    <property type="match status" value="1"/>
</dbReference>
<dbReference type="Pfam" id="PF08501">
    <property type="entry name" value="Shikimate_dh_N"/>
    <property type="match status" value="1"/>
</dbReference>
<dbReference type="SUPFAM" id="SSF53223">
    <property type="entry name" value="Aminoacid dehydrogenase-like, N-terminal domain"/>
    <property type="match status" value="1"/>
</dbReference>
<dbReference type="SUPFAM" id="SSF51735">
    <property type="entry name" value="NAD(P)-binding Rossmann-fold domains"/>
    <property type="match status" value="1"/>
</dbReference>
<proteinExistence type="inferred from homology"/>
<name>AROE_PROA2</name>
<comment type="function">
    <text evidence="1">Involved in the biosynthesis of the chorismate, which leads to the biosynthesis of aromatic amino acids. Catalyzes the reversible NADPH linked reduction of 3-dehydroshikimate (DHSA) to yield shikimate (SA).</text>
</comment>
<comment type="catalytic activity">
    <reaction evidence="1">
        <text>shikimate + NADP(+) = 3-dehydroshikimate + NADPH + H(+)</text>
        <dbReference type="Rhea" id="RHEA:17737"/>
        <dbReference type="ChEBI" id="CHEBI:15378"/>
        <dbReference type="ChEBI" id="CHEBI:16630"/>
        <dbReference type="ChEBI" id="CHEBI:36208"/>
        <dbReference type="ChEBI" id="CHEBI:57783"/>
        <dbReference type="ChEBI" id="CHEBI:58349"/>
        <dbReference type="EC" id="1.1.1.25"/>
    </reaction>
</comment>
<comment type="pathway">
    <text evidence="1">Metabolic intermediate biosynthesis; chorismate biosynthesis; chorismate from D-erythrose 4-phosphate and phosphoenolpyruvate: step 4/7.</text>
</comment>
<comment type="subunit">
    <text evidence="1">Homodimer.</text>
</comment>
<comment type="similarity">
    <text evidence="1">Belongs to the shikimate dehydrogenase family.</text>
</comment>
<feature type="chain" id="PRO_1000100130" description="Shikimate dehydrogenase (NADP(+))">
    <location>
        <begin position="1"/>
        <end position="290"/>
    </location>
</feature>
<feature type="active site" description="Proton acceptor" evidence="1">
    <location>
        <position position="70"/>
    </location>
</feature>
<feature type="binding site" evidence="1">
    <location>
        <begin position="18"/>
        <end position="20"/>
    </location>
    <ligand>
        <name>shikimate</name>
        <dbReference type="ChEBI" id="CHEBI:36208"/>
    </ligand>
</feature>
<feature type="binding site" evidence="1">
    <location>
        <position position="66"/>
    </location>
    <ligand>
        <name>shikimate</name>
        <dbReference type="ChEBI" id="CHEBI:36208"/>
    </ligand>
</feature>
<feature type="binding site" evidence="1">
    <location>
        <position position="91"/>
    </location>
    <ligand>
        <name>shikimate</name>
        <dbReference type="ChEBI" id="CHEBI:36208"/>
    </ligand>
</feature>
<feature type="binding site" evidence="1">
    <location>
        <position position="106"/>
    </location>
    <ligand>
        <name>shikimate</name>
        <dbReference type="ChEBI" id="CHEBI:36208"/>
    </ligand>
</feature>
<feature type="binding site" evidence="1">
    <location>
        <begin position="130"/>
        <end position="134"/>
    </location>
    <ligand>
        <name>NADP(+)</name>
        <dbReference type="ChEBI" id="CHEBI:58349"/>
    </ligand>
</feature>
<feature type="binding site" evidence="1">
    <location>
        <position position="230"/>
    </location>
    <ligand>
        <name>NADP(+)</name>
        <dbReference type="ChEBI" id="CHEBI:58349"/>
    </ligand>
</feature>
<feature type="binding site" evidence="1">
    <location>
        <position position="232"/>
    </location>
    <ligand>
        <name>shikimate</name>
        <dbReference type="ChEBI" id="CHEBI:36208"/>
    </ligand>
</feature>
<feature type="binding site" evidence="1">
    <location>
        <position position="253"/>
    </location>
    <ligand>
        <name>NADP(+)</name>
        <dbReference type="ChEBI" id="CHEBI:58349"/>
    </ligand>
</feature>
<protein>
    <recommendedName>
        <fullName evidence="1">Shikimate dehydrogenase (NADP(+))</fullName>
        <shortName evidence="1">SDH</shortName>
        <ecNumber evidence="1">1.1.1.25</ecNumber>
    </recommendedName>
</protein>
<accession>B4S9K2</accession>
<evidence type="ECO:0000255" key="1">
    <source>
        <dbReference type="HAMAP-Rule" id="MF_00222"/>
    </source>
</evidence>
<reference key="1">
    <citation type="submission" date="2008-06" db="EMBL/GenBank/DDBJ databases">
        <title>Complete sequence of chromosome of Prosthecochloris aestuarii DSM 271.</title>
        <authorList>
            <consortium name="US DOE Joint Genome Institute"/>
            <person name="Lucas S."/>
            <person name="Copeland A."/>
            <person name="Lapidus A."/>
            <person name="Glavina del Rio T."/>
            <person name="Dalin E."/>
            <person name="Tice H."/>
            <person name="Bruce D."/>
            <person name="Goodwin L."/>
            <person name="Pitluck S."/>
            <person name="Schmutz J."/>
            <person name="Larimer F."/>
            <person name="Land M."/>
            <person name="Hauser L."/>
            <person name="Kyrpides N."/>
            <person name="Anderson I."/>
            <person name="Liu Z."/>
            <person name="Li T."/>
            <person name="Zhao F."/>
            <person name="Overmann J."/>
            <person name="Bryant D.A."/>
            <person name="Richardson P."/>
        </authorList>
    </citation>
    <scope>NUCLEOTIDE SEQUENCE [LARGE SCALE GENOMIC DNA]</scope>
    <source>
        <strain>DSM 271 / SK 413</strain>
    </source>
</reference>
<gene>
    <name evidence="1" type="primary">aroE</name>
    <name type="ordered locus">Paes_1654</name>
</gene>
<keyword id="KW-0028">Amino-acid biosynthesis</keyword>
<keyword id="KW-0057">Aromatic amino acid biosynthesis</keyword>
<keyword id="KW-0521">NADP</keyword>
<keyword id="KW-0560">Oxidoreductase</keyword>
<organism>
    <name type="scientific">Prosthecochloris aestuarii (strain DSM 271 / SK 413)</name>
    <dbReference type="NCBI Taxonomy" id="290512"/>
    <lineage>
        <taxon>Bacteria</taxon>
        <taxon>Pseudomonadati</taxon>
        <taxon>Chlorobiota</taxon>
        <taxon>Chlorobiia</taxon>
        <taxon>Chlorobiales</taxon>
        <taxon>Chlorobiaceae</taxon>
        <taxon>Prosthecochloris</taxon>
    </lineage>
</organism>